<protein>
    <recommendedName>
        <fullName evidence="2">tRNA (guanine-N(7)-)-methyltransferase</fullName>
        <ecNumber evidence="2">2.1.1.33</ecNumber>
    </recommendedName>
    <alternativeName>
        <fullName evidence="2">tRNA (guanine(46)-N(7))-methyltransferase</fullName>
    </alternativeName>
    <alternativeName>
        <fullName evidence="2">tRNA(m7G46)-methyltransferase</fullName>
    </alternativeName>
</protein>
<gene>
    <name evidence="2" type="primary">trmB</name>
    <name type="ordered locus">SA1569</name>
</gene>
<sequence>MRVRYKPWAEDYLKDHPELVDMEGQHAGEMTEWFDKTQPIHIEIGSGMGQFITTLAAQNPHINYISMEREKSIVYKVLDKVKEMGLTNLKIICNDAIELNEYFKDGEVSRIYLNFSDPWPKNRHAKRRLTYHTFLALYQQILNDEGDLHFKTDNRGLFAYSLESMSQFGMYFTKINLNLHQEDDGSNILTEYEKKFSDKGSRIYRMEAKFHSQK</sequence>
<reference key="1">
    <citation type="journal article" date="2001" name="Lancet">
        <title>Whole genome sequencing of meticillin-resistant Staphylococcus aureus.</title>
        <authorList>
            <person name="Kuroda M."/>
            <person name="Ohta T."/>
            <person name="Uchiyama I."/>
            <person name="Baba T."/>
            <person name="Yuzawa H."/>
            <person name="Kobayashi I."/>
            <person name="Cui L."/>
            <person name="Oguchi A."/>
            <person name="Aoki K."/>
            <person name="Nagai Y."/>
            <person name="Lian J.-Q."/>
            <person name="Ito T."/>
            <person name="Kanamori M."/>
            <person name="Matsumaru H."/>
            <person name="Maruyama A."/>
            <person name="Murakami H."/>
            <person name="Hosoyama A."/>
            <person name="Mizutani-Ui Y."/>
            <person name="Takahashi N.K."/>
            <person name="Sawano T."/>
            <person name="Inoue R."/>
            <person name="Kaito C."/>
            <person name="Sekimizu K."/>
            <person name="Hirakawa H."/>
            <person name="Kuhara S."/>
            <person name="Goto S."/>
            <person name="Yabuzaki J."/>
            <person name="Kanehisa M."/>
            <person name="Yamashita A."/>
            <person name="Oshima K."/>
            <person name="Furuya K."/>
            <person name="Yoshino C."/>
            <person name="Shiba T."/>
            <person name="Hattori M."/>
            <person name="Ogasawara N."/>
            <person name="Hayashi H."/>
            <person name="Hiramatsu K."/>
        </authorList>
    </citation>
    <scope>NUCLEOTIDE SEQUENCE [LARGE SCALE GENOMIC DNA]</scope>
    <source>
        <strain>N315</strain>
    </source>
</reference>
<keyword id="KW-0489">Methyltransferase</keyword>
<keyword id="KW-0949">S-adenosyl-L-methionine</keyword>
<keyword id="KW-0808">Transferase</keyword>
<keyword id="KW-0819">tRNA processing</keyword>
<accession>P67501</accession>
<accession>Q99TB6</accession>
<name>TRMB_STAAN</name>
<organism>
    <name type="scientific">Staphylococcus aureus (strain N315)</name>
    <dbReference type="NCBI Taxonomy" id="158879"/>
    <lineage>
        <taxon>Bacteria</taxon>
        <taxon>Bacillati</taxon>
        <taxon>Bacillota</taxon>
        <taxon>Bacilli</taxon>
        <taxon>Bacillales</taxon>
        <taxon>Staphylococcaceae</taxon>
        <taxon>Staphylococcus</taxon>
    </lineage>
</organism>
<proteinExistence type="inferred from homology"/>
<dbReference type="EC" id="2.1.1.33" evidence="2"/>
<dbReference type="EMBL" id="BA000018">
    <property type="protein sequence ID" value="BAB42837.1"/>
    <property type="molecule type" value="Genomic_DNA"/>
</dbReference>
<dbReference type="PIR" id="H89959">
    <property type="entry name" value="H89959"/>
</dbReference>
<dbReference type="RefSeq" id="WP_001266161.1">
    <property type="nucleotide sequence ID" value="NC_002745.2"/>
</dbReference>
<dbReference type="SMR" id="P67501"/>
<dbReference type="EnsemblBacteria" id="BAB42837">
    <property type="protein sequence ID" value="BAB42837"/>
    <property type="gene ID" value="BAB42837"/>
</dbReference>
<dbReference type="KEGG" id="sau:SA1569"/>
<dbReference type="HOGENOM" id="CLU_050910_2_1_9"/>
<dbReference type="UniPathway" id="UPA00989"/>
<dbReference type="GO" id="GO:0043527">
    <property type="term" value="C:tRNA methyltransferase complex"/>
    <property type="evidence" value="ECO:0007669"/>
    <property type="project" value="TreeGrafter"/>
</dbReference>
<dbReference type="GO" id="GO:0008176">
    <property type="term" value="F:tRNA (guanine(46)-N7)-methyltransferase activity"/>
    <property type="evidence" value="ECO:0007669"/>
    <property type="project" value="UniProtKB-UniRule"/>
</dbReference>
<dbReference type="CDD" id="cd02440">
    <property type="entry name" value="AdoMet_MTases"/>
    <property type="match status" value="1"/>
</dbReference>
<dbReference type="FunFam" id="3.40.50.150:FF:000035">
    <property type="entry name" value="tRNA (guanine-N(7)-)-methyltransferase"/>
    <property type="match status" value="1"/>
</dbReference>
<dbReference type="Gene3D" id="3.40.50.150">
    <property type="entry name" value="Vaccinia Virus protein VP39"/>
    <property type="match status" value="1"/>
</dbReference>
<dbReference type="HAMAP" id="MF_01057">
    <property type="entry name" value="tRNA_methyltr_TrmB"/>
    <property type="match status" value="1"/>
</dbReference>
<dbReference type="InterPro" id="IPR029063">
    <property type="entry name" value="SAM-dependent_MTases_sf"/>
</dbReference>
<dbReference type="InterPro" id="IPR003358">
    <property type="entry name" value="tRNA_(Gua-N-7)_MeTrfase_Trmb"/>
</dbReference>
<dbReference type="InterPro" id="IPR055361">
    <property type="entry name" value="tRNA_methyltr_TrmB_bact"/>
</dbReference>
<dbReference type="NCBIfam" id="NF001080">
    <property type="entry name" value="PRK00121.2-2"/>
    <property type="match status" value="1"/>
</dbReference>
<dbReference type="NCBIfam" id="TIGR00091">
    <property type="entry name" value="tRNA (guanosine(46)-N7)-methyltransferase TrmB"/>
    <property type="match status" value="1"/>
</dbReference>
<dbReference type="PANTHER" id="PTHR23417">
    <property type="entry name" value="3-DEOXY-D-MANNO-OCTULOSONIC-ACID TRANSFERASE/TRNA GUANINE-N 7 - -METHYLTRANSFERASE"/>
    <property type="match status" value="1"/>
</dbReference>
<dbReference type="PANTHER" id="PTHR23417:SF14">
    <property type="entry name" value="PENTACOTRIPEPTIDE-REPEAT REGION OF PRORP DOMAIN-CONTAINING PROTEIN"/>
    <property type="match status" value="1"/>
</dbReference>
<dbReference type="Pfam" id="PF02390">
    <property type="entry name" value="Methyltransf_4"/>
    <property type="match status" value="1"/>
</dbReference>
<dbReference type="SUPFAM" id="SSF53335">
    <property type="entry name" value="S-adenosyl-L-methionine-dependent methyltransferases"/>
    <property type="match status" value="1"/>
</dbReference>
<dbReference type="PROSITE" id="PS51625">
    <property type="entry name" value="SAM_MT_TRMB"/>
    <property type="match status" value="1"/>
</dbReference>
<comment type="function">
    <text evidence="2">Catalyzes the formation of N(7)-methylguanine at position 46 (m7G46) in tRNA.</text>
</comment>
<comment type="catalytic activity">
    <reaction evidence="2">
        <text>guanosine(46) in tRNA + S-adenosyl-L-methionine = N(7)-methylguanosine(46) in tRNA + S-adenosyl-L-homocysteine</text>
        <dbReference type="Rhea" id="RHEA:42708"/>
        <dbReference type="Rhea" id="RHEA-COMP:10188"/>
        <dbReference type="Rhea" id="RHEA-COMP:10189"/>
        <dbReference type="ChEBI" id="CHEBI:57856"/>
        <dbReference type="ChEBI" id="CHEBI:59789"/>
        <dbReference type="ChEBI" id="CHEBI:74269"/>
        <dbReference type="ChEBI" id="CHEBI:74480"/>
        <dbReference type="EC" id="2.1.1.33"/>
    </reaction>
</comment>
<comment type="pathway">
    <text evidence="2">tRNA modification; N(7)-methylguanine-tRNA biosynthesis.</text>
</comment>
<comment type="similarity">
    <text evidence="2">Belongs to the class I-like SAM-binding methyltransferase superfamily. TrmB family.</text>
</comment>
<evidence type="ECO:0000250" key="1"/>
<evidence type="ECO:0000255" key="2">
    <source>
        <dbReference type="HAMAP-Rule" id="MF_01057"/>
    </source>
</evidence>
<feature type="chain" id="PRO_0000171390" description="tRNA (guanine-N(7)-)-methyltransferase">
    <location>
        <begin position="1"/>
        <end position="214"/>
    </location>
</feature>
<feature type="active site" evidence="1">
    <location>
        <position position="117"/>
    </location>
</feature>
<feature type="binding site" evidence="2">
    <location>
        <position position="43"/>
    </location>
    <ligand>
        <name>S-adenosyl-L-methionine</name>
        <dbReference type="ChEBI" id="CHEBI:59789"/>
    </ligand>
</feature>
<feature type="binding site" evidence="2">
    <location>
        <position position="68"/>
    </location>
    <ligand>
        <name>S-adenosyl-L-methionine</name>
        <dbReference type="ChEBI" id="CHEBI:59789"/>
    </ligand>
</feature>
<feature type="binding site" evidence="2">
    <location>
        <position position="95"/>
    </location>
    <ligand>
        <name>S-adenosyl-L-methionine</name>
        <dbReference type="ChEBI" id="CHEBI:59789"/>
    </ligand>
</feature>
<feature type="binding site" evidence="2">
    <location>
        <position position="117"/>
    </location>
    <ligand>
        <name>S-adenosyl-L-methionine</name>
        <dbReference type="ChEBI" id="CHEBI:59789"/>
    </ligand>
</feature>
<feature type="binding site" evidence="2">
    <location>
        <position position="121"/>
    </location>
    <ligand>
        <name>substrate</name>
    </ligand>
</feature>
<feature type="binding site" evidence="2">
    <location>
        <position position="153"/>
    </location>
    <ligand>
        <name>substrate</name>
    </ligand>
</feature>
<feature type="binding site" evidence="2">
    <location>
        <begin position="190"/>
        <end position="193"/>
    </location>
    <ligand>
        <name>substrate</name>
    </ligand>
</feature>